<dbReference type="EMBL" id="BC123576">
    <property type="protein sequence ID" value="AAI23577.1"/>
    <property type="molecule type" value="mRNA"/>
</dbReference>
<dbReference type="RefSeq" id="NP_001071456.1">
    <property type="nucleotide sequence ID" value="NM_001077988.2"/>
</dbReference>
<dbReference type="RefSeq" id="NP_001415224.1">
    <property type="nucleotide sequence ID" value="NM_001428295.1"/>
</dbReference>
<dbReference type="RefSeq" id="XP_015326804.1">
    <property type="nucleotide sequence ID" value="XM_015471318.1"/>
</dbReference>
<dbReference type="RefSeq" id="XP_015326805.1">
    <property type="nucleotide sequence ID" value="XM_015471319.3"/>
</dbReference>
<dbReference type="RefSeq" id="XP_059742493.1">
    <property type="nucleotide sequence ID" value="XM_059886510.1"/>
</dbReference>
<dbReference type="RefSeq" id="XP_059742494.1">
    <property type="nucleotide sequence ID" value="XM_059886511.1"/>
</dbReference>
<dbReference type="SMR" id="Q08DT3"/>
<dbReference type="FunCoup" id="Q08DT3">
    <property type="interactions" value="462"/>
</dbReference>
<dbReference type="STRING" id="9913.ENSBTAP00000040469"/>
<dbReference type="GlyCosmos" id="Q08DT3">
    <property type="glycosylation" value="1 site, No reported glycans"/>
</dbReference>
<dbReference type="GlyGen" id="Q08DT3">
    <property type="glycosylation" value="1 site"/>
</dbReference>
<dbReference type="PaxDb" id="9913-ENSBTAP00000040469"/>
<dbReference type="Ensembl" id="ENSBTAT00000098411.1">
    <property type="protein sequence ID" value="ENSBTAP00000078842.1"/>
    <property type="gene ID" value="ENSBTAG00000010223.7"/>
</dbReference>
<dbReference type="Ensembl" id="ENSBTAT00000099539.1">
    <property type="protein sequence ID" value="ENSBTAP00000084117.1"/>
    <property type="gene ID" value="ENSBTAG00000010223.7"/>
</dbReference>
<dbReference type="Ensembl" id="ENSBTAT00000107230.1">
    <property type="protein sequence ID" value="ENSBTAP00000078815.1"/>
    <property type="gene ID" value="ENSBTAG00000010223.7"/>
</dbReference>
<dbReference type="Ensembl" id="ENSBTAT00000111210.1">
    <property type="protein sequence ID" value="ENSBTAP00000101763.1"/>
    <property type="gene ID" value="ENSBTAG00000010223.7"/>
</dbReference>
<dbReference type="Ensembl" id="ENSBTAT00000124140.1">
    <property type="protein sequence ID" value="ENSBTAP00000079651.1"/>
    <property type="gene ID" value="ENSBTAG00000010223.7"/>
</dbReference>
<dbReference type="Ensembl" id="ENSBTAT00000127907.1">
    <property type="protein sequence ID" value="ENSBTAP00000097188.1"/>
    <property type="gene ID" value="ENSBTAG00000010223.7"/>
</dbReference>
<dbReference type="Ensembl" id="ENSBTAT00000133363.1">
    <property type="protein sequence ID" value="ENSBTAP00000102991.1"/>
    <property type="gene ID" value="ENSBTAG00000010223.7"/>
</dbReference>
<dbReference type="GeneID" id="532393"/>
<dbReference type="KEGG" id="bta:532393"/>
<dbReference type="CTD" id="4908"/>
<dbReference type="VEuPathDB" id="HostDB:ENSBTAG00000010223"/>
<dbReference type="VGNC" id="VGNC:32299">
    <property type="gene designation" value="NTF3"/>
</dbReference>
<dbReference type="eggNOG" id="ENOG502R4FK">
    <property type="taxonomic scope" value="Eukaryota"/>
</dbReference>
<dbReference type="GeneTree" id="ENSGT00390000007725"/>
<dbReference type="HOGENOM" id="CLU_059942_1_1_1"/>
<dbReference type="InParanoid" id="Q08DT3"/>
<dbReference type="OMA" id="FQPMIAM"/>
<dbReference type="OrthoDB" id="6491780at2759"/>
<dbReference type="TreeFam" id="TF106463"/>
<dbReference type="Reactome" id="R-BTA-1257604">
    <property type="pathway name" value="PIP3 activates AKT signaling"/>
</dbReference>
<dbReference type="Reactome" id="R-BTA-6811558">
    <property type="pathway name" value="PI5P, PP2A and IER3 Regulate PI3K/AKT Signaling"/>
</dbReference>
<dbReference type="Reactome" id="R-BTA-9034013">
    <property type="pathway name" value="NTF3 activates NTRK3 signaling"/>
</dbReference>
<dbReference type="Reactome" id="R-BTA-9034793">
    <property type="pathway name" value="Activated NTRK3 signals through PLCG1"/>
</dbReference>
<dbReference type="Reactome" id="R-BTA-9603381">
    <property type="pathway name" value="Activated NTRK3 signals through PI3K"/>
</dbReference>
<dbReference type="Proteomes" id="UP000009136">
    <property type="component" value="Chromosome 5"/>
</dbReference>
<dbReference type="Bgee" id="ENSBTAG00000010223">
    <property type="expression patterns" value="Expressed in trachea and 77 other cell types or tissues"/>
</dbReference>
<dbReference type="GO" id="GO:0030424">
    <property type="term" value="C:axon"/>
    <property type="evidence" value="ECO:0000318"/>
    <property type="project" value="GO_Central"/>
</dbReference>
<dbReference type="GO" id="GO:0030425">
    <property type="term" value="C:dendrite"/>
    <property type="evidence" value="ECO:0000318"/>
    <property type="project" value="GO_Central"/>
</dbReference>
<dbReference type="GO" id="GO:0005615">
    <property type="term" value="C:extracellular space"/>
    <property type="evidence" value="ECO:0000318"/>
    <property type="project" value="GO_Central"/>
</dbReference>
<dbReference type="GO" id="GO:0008021">
    <property type="term" value="C:synaptic vesicle"/>
    <property type="evidence" value="ECO:0000318"/>
    <property type="project" value="GO_Central"/>
</dbReference>
<dbReference type="GO" id="GO:0008083">
    <property type="term" value="F:growth factor activity"/>
    <property type="evidence" value="ECO:0000318"/>
    <property type="project" value="GO_Central"/>
</dbReference>
<dbReference type="GO" id="GO:0005163">
    <property type="term" value="F:nerve growth factor receptor binding"/>
    <property type="evidence" value="ECO:0000318"/>
    <property type="project" value="GO_Central"/>
</dbReference>
<dbReference type="GO" id="GO:0007169">
    <property type="term" value="P:cell surface receptor protein tyrosine kinase signaling pathway"/>
    <property type="evidence" value="ECO:0000318"/>
    <property type="project" value="GO_Central"/>
</dbReference>
<dbReference type="GO" id="GO:0050804">
    <property type="term" value="P:modulation of chemical synaptic transmission"/>
    <property type="evidence" value="ECO:0000318"/>
    <property type="project" value="GO_Central"/>
</dbReference>
<dbReference type="GO" id="GO:0043524">
    <property type="term" value="P:negative regulation of neuron apoptotic process"/>
    <property type="evidence" value="ECO:0000318"/>
    <property type="project" value="GO_Central"/>
</dbReference>
<dbReference type="GO" id="GO:0021675">
    <property type="term" value="P:nerve development"/>
    <property type="evidence" value="ECO:0000318"/>
    <property type="project" value="GO_Central"/>
</dbReference>
<dbReference type="GO" id="GO:0038180">
    <property type="term" value="P:nerve growth factor signaling pathway"/>
    <property type="evidence" value="ECO:0000318"/>
    <property type="project" value="GO_Central"/>
</dbReference>
<dbReference type="GO" id="GO:0048812">
    <property type="term" value="P:neuron projection morphogenesis"/>
    <property type="evidence" value="ECO:0000318"/>
    <property type="project" value="GO_Central"/>
</dbReference>
<dbReference type="FunFam" id="2.10.90.10:FF:000002">
    <property type="entry name" value="Brain-derived neurotrophic factor"/>
    <property type="match status" value="1"/>
</dbReference>
<dbReference type="Gene3D" id="2.10.90.10">
    <property type="entry name" value="Cystine-knot cytokines"/>
    <property type="match status" value="1"/>
</dbReference>
<dbReference type="InterPro" id="IPR029034">
    <property type="entry name" value="Cystine-knot_cytokine"/>
</dbReference>
<dbReference type="InterPro" id="IPR020408">
    <property type="entry name" value="Nerve_growth_factor-like"/>
</dbReference>
<dbReference type="InterPro" id="IPR002072">
    <property type="entry name" value="Nerve_growth_factor-rel"/>
</dbReference>
<dbReference type="InterPro" id="IPR019846">
    <property type="entry name" value="Nerve_growth_factor_CS"/>
</dbReference>
<dbReference type="InterPro" id="IPR015578">
    <property type="entry name" value="Neurotrophin-3"/>
</dbReference>
<dbReference type="InterPro" id="IPR045815">
    <property type="entry name" value="NTF3_N"/>
</dbReference>
<dbReference type="PANTHER" id="PTHR11589">
    <property type="entry name" value="NERVE GROWTH FACTOR NGF -RELATED"/>
    <property type="match status" value="1"/>
</dbReference>
<dbReference type="PANTHER" id="PTHR11589:SF4">
    <property type="entry name" value="NEUROTROPHIN-3"/>
    <property type="match status" value="1"/>
</dbReference>
<dbReference type="Pfam" id="PF00243">
    <property type="entry name" value="NGF"/>
    <property type="match status" value="1"/>
</dbReference>
<dbReference type="Pfam" id="PF19338">
    <property type="entry name" value="NTF3_N"/>
    <property type="match status" value="1"/>
</dbReference>
<dbReference type="PIRSF" id="PIRSF001789">
    <property type="entry name" value="NGF"/>
    <property type="match status" value="1"/>
</dbReference>
<dbReference type="PRINTS" id="PR01914">
    <property type="entry name" value="NEUROTROPHN3"/>
</dbReference>
<dbReference type="PRINTS" id="PR00268">
    <property type="entry name" value="NGF"/>
</dbReference>
<dbReference type="SMART" id="SM00140">
    <property type="entry name" value="NGF"/>
    <property type="match status" value="1"/>
</dbReference>
<dbReference type="SUPFAM" id="SSF57501">
    <property type="entry name" value="Cystine-knot cytokines"/>
    <property type="match status" value="1"/>
</dbReference>
<dbReference type="PROSITE" id="PS00248">
    <property type="entry name" value="NGF_1"/>
    <property type="match status" value="1"/>
</dbReference>
<dbReference type="PROSITE" id="PS50270">
    <property type="entry name" value="NGF_2"/>
    <property type="match status" value="1"/>
</dbReference>
<sequence>MSILFYVMFLAYLRGVQGNSMDQRSLPEDSLNSLIIKLIQADILKNKLSKQMVDVKENYQSTLPKAEAPPREPAKSEFQPVTAMGPELLRQQRRYSSPRVLLSDSTPLEPPPLYLMEDYVGSPVAANRTSRRKRYAEHKSHRGEYSVCDSESLWVTDKSSAIDIRGHQVTVLGEIKTGNSPVKQYFYETRCKEARPVKNGCRGIDDKHWNSQCKTSQTYVRALTSENNKLVGWRWIRIDTSCVCALSRKIGRT</sequence>
<keyword id="KW-0165">Cleavage on pair of basic residues</keyword>
<keyword id="KW-1015">Disulfide bond</keyword>
<keyword id="KW-0325">Glycoprotein</keyword>
<keyword id="KW-0339">Growth factor</keyword>
<keyword id="KW-1185">Reference proteome</keyword>
<keyword id="KW-0964">Secreted</keyword>
<keyword id="KW-0732">Signal</keyword>
<comment type="function">
    <text>Seems to promote the survival of visceral and proprioceptive sensory neurons.</text>
</comment>
<comment type="subcellular location">
    <subcellularLocation>
        <location evidence="1">Secreted</location>
    </subcellularLocation>
</comment>
<comment type="similarity">
    <text evidence="4">Belongs to the NGF-beta family.</text>
</comment>
<protein>
    <recommendedName>
        <fullName>Neurotrophin-3</fullName>
        <shortName>NT-3</shortName>
    </recommendedName>
</protein>
<name>NTF3_BOVIN</name>
<organism>
    <name type="scientific">Bos taurus</name>
    <name type="common">Bovine</name>
    <dbReference type="NCBI Taxonomy" id="9913"/>
    <lineage>
        <taxon>Eukaryota</taxon>
        <taxon>Metazoa</taxon>
        <taxon>Chordata</taxon>
        <taxon>Craniata</taxon>
        <taxon>Vertebrata</taxon>
        <taxon>Euteleostomi</taxon>
        <taxon>Mammalia</taxon>
        <taxon>Eutheria</taxon>
        <taxon>Laurasiatheria</taxon>
        <taxon>Artiodactyla</taxon>
        <taxon>Ruminantia</taxon>
        <taxon>Pecora</taxon>
        <taxon>Bovidae</taxon>
        <taxon>Bovinae</taxon>
        <taxon>Bos</taxon>
    </lineage>
</organism>
<gene>
    <name type="primary">NTF3</name>
</gene>
<accession>Q08DT3</accession>
<proteinExistence type="evidence at transcript level"/>
<feature type="signal peptide" evidence="2">
    <location>
        <begin position="1"/>
        <end position="18"/>
    </location>
</feature>
<feature type="propeptide" id="PRO_0000321573" evidence="1">
    <location>
        <begin position="19"/>
        <end position="134"/>
    </location>
</feature>
<feature type="chain" id="PRO_0000321574" description="Neurotrophin-3">
    <location>
        <begin position="135"/>
        <end position="253"/>
    </location>
</feature>
<feature type="region of interest" description="Disordered" evidence="3">
    <location>
        <begin position="62"/>
        <end position="89"/>
    </location>
</feature>
<feature type="glycosylation site" description="N-linked (GlcNAc...) asparagine" evidence="2">
    <location>
        <position position="127"/>
    </location>
</feature>
<feature type="disulfide bond" evidence="1">
    <location>
        <begin position="148"/>
        <end position="213"/>
    </location>
</feature>
<feature type="disulfide bond" evidence="1">
    <location>
        <begin position="191"/>
        <end position="242"/>
    </location>
</feature>
<feature type="disulfide bond" evidence="1">
    <location>
        <begin position="201"/>
        <end position="244"/>
    </location>
</feature>
<reference key="1">
    <citation type="submission" date="2006-09" db="EMBL/GenBank/DDBJ databases">
        <authorList>
            <consortium name="NIH - Mammalian Gene Collection (MGC) project"/>
        </authorList>
    </citation>
    <scope>NUCLEOTIDE SEQUENCE [LARGE SCALE MRNA]</scope>
    <source>
        <strain>Hereford</strain>
        <tissue>Fetal spinal cord</tissue>
    </source>
</reference>
<evidence type="ECO:0000250" key="1"/>
<evidence type="ECO:0000255" key="2"/>
<evidence type="ECO:0000256" key="3">
    <source>
        <dbReference type="SAM" id="MobiDB-lite"/>
    </source>
</evidence>
<evidence type="ECO:0000305" key="4"/>